<accession>O89017</accession>
<organism>
    <name type="scientific">Mus musculus</name>
    <name type="common">Mouse</name>
    <dbReference type="NCBI Taxonomy" id="10090"/>
    <lineage>
        <taxon>Eukaryota</taxon>
        <taxon>Metazoa</taxon>
        <taxon>Chordata</taxon>
        <taxon>Craniata</taxon>
        <taxon>Vertebrata</taxon>
        <taxon>Euteleostomi</taxon>
        <taxon>Mammalia</taxon>
        <taxon>Eutheria</taxon>
        <taxon>Euarchontoglires</taxon>
        <taxon>Glires</taxon>
        <taxon>Rodentia</taxon>
        <taxon>Myomorpha</taxon>
        <taxon>Muroidea</taxon>
        <taxon>Muridae</taxon>
        <taxon>Murinae</taxon>
        <taxon>Mus</taxon>
        <taxon>Mus</taxon>
    </lineage>
</organism>
<evidence type="ECO:0000250" key="1">
    <source>
        <dbReference type="UniProtKB" id="Q99538"/>
    </source>
</evidence>
<evidence type="ECO:0000255" key="2"/>
<evidence type="ECO:0000269" key="3">
    <source>
    </source>
</evidence>
<evidence type="ECO:0000269" key="4">
    <source>
    </source>
</evidence>
<evidence type="ECO:0000269" key="5">
    <source>
    </source>
</evidence>
<evidence type="ECO:0000269" key="6">
    <source>
    </source>
</evidence>
<evidence type="ECO:0000269" key="7">
    <source>
    </source>
</evidence>
<evidence type="ECO:0000269" key="8">
    <source>
    </source>
</evidence>
<evidence type="ECO:0000303" key="9">
    <source>
    </source>
</evidence>
<evidence type="ECO:0000305" key="10"/>
<evidence type="ECO:0000305" key="11">
    <source>
    </source>
</evidence>
<evidence type="ECO:0007829" key="12">
    <source>
        <dbReference type="PDB" id="4NOJ"/>
    </source>
</evidence>
<evidence type="ECO:0007829" key="13">
    <source>
        <dbReference type="PDB" id="4NOL"/>
    </source>
</evidence>
<evidence type="ECO:0007829" key="14">
    <source>
        <dbReference type="PDB" id="4NOM"/>
    </source>
</evidence>
<sequence length="435" mass="49373">MTWRVAVLLSLVLGAGAVPVGVDDPEDGGKHWVVIVAGSNGWYNYRHQADACHAYQIIHRNGIPDEQIIVMMYDDIANSEENPTPGVVINRPNGTDVYKGVLKDYTGEDVTPENFLAVLRGDAEAVKGKGSGKVLKSGPRDHVFIYFTDHGATGILVFPNDDLHVKDLNKTIRYMYEHKMYQKMVFYIEACESGSMMNHLPDDINVYATTAANPKESSYACYYDEERGTYLGDWYSVNWMEDSDVEDLTKETLHKQYHLVKSHTNTSHVMQYGNKSISTMKVMQFQGMKHRASSPISLPPVTHLDLTPSPDVPLTILKRKLLRTNDVKESQNLIGQIQQFLDARHVIEKSVHKIVSLLAGFGETAERHLSERTMLTAHDCYQEAVTHFRTHCFNWHSVTYEHALRYLYVLANLCEAPYPIDRIEMAMDKVCLSHY</sequence>
<reference key="1">
    <citation type="journal article" date="1998" name="Biochem. J.">
        <title>Cloning and expression of mouse legumain, a lysosomal endopeptidase.</title>
        <authorList>
            <person name="Chen J.-M."/>
            <person name="Dando P.M."/>
            <person name="Stevens R.A.E."/>
            <person name="Fortunato M."/>
            <person name="Barrett A.J."/>
        </authorList>
    </citation>
    <scope>NUCLEOTIDE SEQUENCE [MRNA]</scope>
    <scope>CATALYTIC ACTIVITY</scope>
    <scope>FUNCTION</scope>
    <scope>SUBCELLULAR LOCATION</scope>
    <scope>BIOPHYSICOCHEMICAL PROPERTIES</scope>
    <scope>TISSUE SPECIFICITY</scope>
</reference>
<reference key="2">
    <citation type="journal article" date="1998" name="FEBS Lett.">
        <title>Autocatalytic activation of human legumain at aspartic acid residues.</title>
        <authorList>
            <person name="Halfon S."/>
            <person name="Patel S."/>
            <person name="Vega F."/>
            <person name="Zurawski S."/>
            <person name="Zurawski G."/>
        </authorList>
    </citation>
    <scope>NUCLEOTIDE SEQUENCE [MRNA]</scope>
</reference>
<reference key="3">
    <citation type="journal article" date="1998" name="FEBS Lett.">
        <title>Identification of the active site of legumain links it to caspases, clostripain and gingipains in a new clan of cysteine endopeptidases.</title>
        <authorList>
            <person name="Chen J.-M."/>
            <person name="Rawlings N.D."/>
            <person name="Stevens R.A."/>
            <person name="Barrett A.J."/>
        </authorList>
    </citation>
    <scope>FUNCTION</scope>
    <scope>ACTIVE SITE</scope>
    <scope>CATALYTIC ACTIVITY</scope>
    <scope>MUTAGENESIS OF HIS-47; CYS-52; HIS-150 AND CYS-191</scope>
</reference>
<reference key="4">
    <citation type="journal article" date="2007" name="FEBS Lett.">
        <title>Legumain/asparaginyl endopeptidase controls extracellular matrix remodeling through the degradation of fibronectin in mouse renal proximal tubular cells.</title>
        <authorList>
            <person name="Morita Y."/>
            <person name="Araki H."/>
            <person name="Sugimoto T."/>
            <person name="Takeuchi K."/>
            <person name="Yamane T."/>
            <person name="Maeda T."/>
            <person name="Yamamoto Y."/>
            <person name="Nishi K."/>
            <person name="Asano M."/>
            <person name="Shirahama-Noda K."/>
            <person name="Nishimura M."/>
            <person name="Uzu T."/>
            <person name="Hara-Nishimura I."/>
            <person name="Koya D."/>
            <person name="Kashiwagi A."/>
            <person name="Ohkubo I."/>
        </authorList>
    </citation>
    <scope>FUNCTION</scope>
    <scope>DISRUPTION PHENOTYPE</scope>
</reference>
<reference key="5">
    <citation type="journal article" date="2010" name="Cell">
        <title>A tissue-specific atlas of mouse protein phosphorylation and expression.</title>
        <authorList>
            <person name="Huttlin E.L."/>
            <person name="Jedrychowski M.P."/>
            <person name="Elias J.E."/>
            <person name="Goswami T."/>
            <person name="Rad R."/>
            <person name="Beausoleil S.A."/>
            <person name="Villen J."/>
            <person name="Haas W."/>
            <person name="Sowa M.E."/>
            <person name="Gygi S.P."/>
        </authorList>
    </citation>
    <scope>IDENTIFICATION BY MASS SPECTROMETRY [LARGE SCALE ANALYSIS]</scope>
    <source>
        <tissue>Brain</tissue>
        <tissue>Brown adipose tissue</tissue>
        <tissue>Heart</tissue>
        <tissue>Kidney</tissue>
        <tissue>Liver</tissue>
        <tissue>Lung</tissue>
        <tissue>Pancreas</tissue>
        <tissue>Spleen</tissue>
        <tissue>Testis</tissue>
    </source>
</reference>
<reference key="6">
    <citation type="journal article" date="2011" name="FASEB J.">
        <title>Asparagine endopeptidase is required for normal kidney physiology and homeostasis.</title>
        <authorList>
            <person name="Miller G."/>
            <person name="Matthews S.P."/>
            <person name="Reinheckel T."/>
            <person name="Fleming S."/>
            <person name="Watts C."/>
        </authorList>
    </citation>
    <scope>DISRUPTION PHENOTYPE</scope>
    <scope>FUNCTION</scope>
    <scope>SUBCELLULAR LOCATION</scope>
    <scope>TISSUE SPECIFICITY</scope>
</reference>
<reference key="7">
    <citation type="journal article" date="2014" name="Cell Res.">
        <title>Structural analysis of asparaginyl endopeptidase reveals the activation mechanism and a reversible intermediate maturation stage.</title>
        <authorList>
            <person name="Zhao L."/>
            <person name="Hua T."/>
            <person name="Crowley C."/>
            <person name="Ru H."/>
            <person name="Ni X."/>
            <person name="Shaw N."/>
            <person name="Jiao L."/>
            <person name="Ding W."/>
            <person name="Qu L."/>
            <person name="Hung L.W."/>
            <person name="Huang W."/>
            <person name="Liu L."/>
            <person name="Ye K."/>
            <person name="Ouyang S."/>
            <person name="Cheng G."/>
            <person name="Liu Z.J."/>
        </authorList>
    </citation>
    <scope>X-RAY CRYSTALLOGRAPHY (2.01 ANGSTROMS)</scope>
    <scope>FUNCTION</scope>
    <scope>CATALYTIC ACTIVITY</scope>
    <scope>SUBUNIT</scope>
    <scope>AUTOCATALYTIC PROCESSING</scope>
    <scope>DISULFIDE BOND</scope>
    <scope>GLYCOSYLATION</scope>
    <scope>PROPEPTIDE</scope>
    <scope>MUTAGENESIS OF ASN-44; ARG-46; HIS-150; GLU-189; CYS-191; ASP-233 AND ASP-311</scope>
    <scope>ACTIVITY REGULATION</scope>
</reference>
<reference key="8">
    <citation type="journal article" date="2023" name="Science">
        <title>Perforin-2 is a pore-forming effector of endocytic escape in cross-presenting dendritic cells.</title>
        <authorList>
            <person name="Rodriguez-Silvestre P."/>
            <person name="Laub M."/>
            <person name="Krawczyk P.A."/>
            <person name="Davies A.K."/>
            <person name="Schessner J.P."/>
            <person name="Parveen R."/>
            <person name="Tuck B.J."/>
            <person name="McEwan W.A."/>
            <person name="Borner G.H.H."/>
            <person name="Kozik P."/>
        </authorList>
    </citation>
    <scope>FUNCTION</scope>
</reference>
<gene>
    <name type="primary">Lgmn</name>
    <name type="synonym">Prsc1</name>
</gene>
<dbReference type="EC" id="3.4.22.34" evidence="5 7 8"/>
<dbReference type="EMBL" id="AJ000990">
    <property type="protein sequence ID" value="CAA04439.1"/>
    <property type="molecule type" value="mRNA"/>
</dbReference>
<dbReference type="EMBL" id="AF044266">
    <property type="protein sequence ID" value="AAF21659.1"/>
    <property type="molecule type" value="mRNA"/>
</dbReference>
<dbReference type="CCDS" id="CCDS26119.1"/>
<dbReference type="RefSeq" id="NP_001365804.1">
    <property type="nucleotide sequence ID" value="NM_001378875.1"/>
</dbReference>
<dbReference type="RefSeq" id="NP_035305.1">
    <property type="nucleotide sequence ID" value="NM_011175.4"/>
</dbReference>
<dbReference type="PDB" id="4NOJ">
    <property type="method" value="X-ray"/>
    <property type="resolution" value="2.80 A"/>
    <property type="chains" value="A=27-289"/>
</dbReference>
<dbReference type="PDB" id="4NOK">
    <property type="method" value="X-ray"/>
    <property type="resolution" value="2.50 A"/>
    <property type="chains" value="A=1-435"/>
</dbReference>
<dbReference type="PDB" id="4NOL">
    <property type="method" value="X-ray"/>
    <property type="resolution" value="2.70 A"/>
    <property type="chains" value="A/B=1-435"/>
</dbReference>
<dbReference type="PDB" id="4NOM">
    <property type="method" value="X-ray"/>
    <property type="resolution" value="2.01 A"/>
    <property type="chains" value="A=1-435"/>
</dbReference>
<dbReference type="PDBsum" id="4NOJ"/>
<dbReference type="PDBsum" id="4NOK"/>
<dbReference type="PDBsum" id="4NOL"/>
<dbReference type="PDBsum" id="4NOM"/>
<dbReference type="SMR" id="O89017"/>
<dbReference type="BioGRID" id="202402">
    <property type="interactions" value="9"/>
</dbReference>
<dbReference type="FunCoup" id="O89017">
    <property type="interactions" value="409"/>
</dbReference>
<dbReference type="STRING" id="10090.ENSMUSP00000021607"/>
<dbReference type="BindingDB" id="O89017"/>
<dbReference type="ChEMBL" id="CHEMBL1949492"/>
<dbReference type="MEROPS" id="C13.004"/>
<dbReference type="GlyConnect" id="2463">
    <property type="glycosylation" value="1 N-Linked glycan (1 site)"/>
</dbReference>
<dbReference type="GlyCosmos" id="O89017">
    <property type="glycosylation" value="4 sites, 1 glycan"/>
</dbReference>
<dbReference type="GlyGen" id="O89017">
    <property type="glycosylation" value="7 sites, 3 N-linked glycans (3 sites), 1 O-linked glycan (2 sites)"/>
</dbReference>
<dbReference type="iPTMnet" id="O89017"/>
<dbReference type="MetOSite" id="O89017"/>
<dbReference type="PhosphoSitePlus" id="O89017"/>
<dbReference type="SwissPalm" id="O89017"/>
<dbReference type="jPOST" id="O89017"/>
<dbReference type="PaxDb" id="10090-ENSMUSP00000021607"/>
<dbReference type="PeptideAtlas" id="O89017"/>
<dbReference type="ProteomicsDB" id="286191"/>
<dbReference type="Pumba" id="O89017"/>
<dbReference type="Antibodypedia" id="17">
    <property type="antibodies" value="336 antibodies from 28 providers"/>
</dbReference>
<dbReference type="DNASU" id="19141"/>
<dbReference type="Ensembl" id="ENSMUST00000021607.9">
    <property type="protein sequence ID" value="ENSMUSP00000021607.9"/>
    <property type="gene ID" value="ENSMUSG00000021190.15"/>
</dbReference>
<dbReference type="Ensembl" id="ENSMUST00000110020.8">
    <property type="protein sequence ID" value="ENSMUSP00000105647.2"/>
    <property type="gene ID" value="ENSMUSG00000021190.15"/>
</dbReference>
<dbReference type="GeneID" id="19141"/>
<dbReference type="KEGG" id="mmu:19141"/>
<dbReference type="UCSC" id="uc007oue.1">
    <property type="organism name" value="mouse"/>
</dbReference>
<dbReference type="AGR" id="MGI:1330838"/>
<dbReference type="CTD" id="5641"/>
<dbReference type="MGI" id="MGI:1330838">
    <property type="gene designation" value="Lgmn"/>
</dbReference>
<dbReference type="VEuPathDB" id="HostDB:ENSMUSG00000021190"/>
<dbReference type="eggNOG" id="KOG1348">
    <property type="taxonomic scope" value="Eukaryota"/>
</dbReference>
<dbReference type="GeneTree" id="ENSGT00940000154782"/>
<dbReference type="HOGENOM" id="CLU_024160_2_0_1"/>
<dbReference type="InParanoid" id="O89017"/>
<dbReference type="OMA" id="YPIDRIC"/>
<dbReference type="OrthoDB" id="192611at2759"/>
<dbReference type="PhylomeDB" id="O89017"/>
<dbReference type="TreeFam" id="TF313403"/>
<dbReference type="BRENDA" id="3.4.22.34">
    <property type="organism ID" value="3474"/>
</dbReference>
<dbReference type="Reactome" id="R-MMU-1679131">
    <property type="pathway name" value="Trafficking and processing of endosomal TLR"/>
</dbReference>
<dbReference type="Reactome" id="R-MMU-2132295">
    <property type="pathway name" value="MHC class II antigen presentation"/>
</dbReference>
<dbReference type="BioGRID-ORCS" id="19141">
    <property type="hits" value="1 hit in 79 CRISPR screens"/>
</dbReference>
<dbReference type="ChiTaRS" id="Lgmn">
    <property type="organism name" value="mouse"/>
</dbReference>
<dbReference type="EvolutionaryTrace" id="O89017"/>
<dbReference type="PRO" id="PR:O89017"/>
<dbReference type="Proteomes" id="UP000000589">
    <property type="component" value="Chromosome 12"/>
</dbReference>
<dbReference type="RNAct" id="O89017">
    <property type="molecule type" value="protein"/>
</dbReference>
<dbReference type="Bgee" id="ENSMUSG00000021190">
    <property type="expression patterns" value="Expressed in stroma of bone marrow and 272 other cell types or tissues"/>
</dbReference>
<dbReference type="ExpressionAtlas" id="O89017">
    <property type="expression patterns" value="baseline and differential"/>
</dbReference>
<dbReference type="GO" id="GO:0045177">
    <property type="term" value="C:apical part of cell"/>
    <property type="evidence" value="ECO:0000314"/>
    <property type="project" value="MGI"/>
</dbReference>
<dbReference type="GO" id="GO:0005576">
    <property type="term" value="C:extracellular region"/>
    <property type="evidence" value="ECO:0007669"/>
    <property type="project" value="Ensembl"/>
</dbReference>
<dbReference type="GO" id="GO:0005770">
    <property type="term" value="C:late endosome"/>
    <property type="evidence" value="ECO:0000314"/>
    <property type="project" value="MGI"/>
</dbReference>
<dbReference type="GO" id="GO:0043202">
    <property type="term" value="C:lysosomal lumen"/>
    <property type="evidence" value="ECO:0000250"/>
    <property type="project" value="UniProtKB"/>
</dbReference>
<dbReference type="GO" id="GO:0005764">
    <property type="term" value="C:lysosome"/>
    <property type="evidence" value="ECO:0000314"/>
    <property type="project" value="UniProtKB"/>
</dbReference>
<dbReference type="GO" id="GO:0048471">
    <property type="term" value="C:perinuclear region of cytoplasm"/>
    <property type="evidence" value="ECO:0007669"/>
    <property type="project" value="Ensembl"/>
</dbReference>
<dbReference type="GO" id="GO:0004197">
    <property type="term" value="F:cysteine-type endopeptidase activity"/>
    <property type="evidence" value="ECO:0000314"/>
    <property type="project" value="UniProtKB"/>
</dbReference>
<dbReference type="GO" id="GO:0061133">
    <property type="term" value="F:endopeptidase activator activity"/>
    <property type="evidence" value="ECO:0007669"/>
    <property type="project" value="Ensembl"/>
</dbReference>
<dbReference type="GO" id="GO:0008233">
    <property type="term" value="F:peptidase activity"/>
    <property type="evidence" value="ECO:0000315"/>
    <property type="project" value="MGI"/>
</dbReference>
<dbReference type="GO" id="GO:0019886">
    <property type="term" value="P:antigen processing and presentation of exogenous peptide antigen via MHC class II"/>
    <property type="evidence" value="ECO:0000250"/>
    <property type="project" value="UniProtKB"/>
</dbReference>
<dbReference type="GO" id="GO:0008306">
    <property type="term" value="P:associative learning"/>
    <property type="evidence" value="ECO:0000316"/>
    <property type="project" value="ARUK-UCL"/>
</dbReference>
<dbReference type="GO" id="GO:1904646">
    <property type="term" value="P:cellular response to amyloid-beta"/>
    <property type="evidence" value="ECO:0007669"/>
    <property type="project" value="Ensembl"/>
</dbReference>
<dbReference type="GO" id="GO:0071277">
    <property type="term" value="P:cellular response to calcium ion"/>
    <property type="evidence" value="ECO:0007669"/>
    <property type="project" value="Ensembl"/>
</dbReference>
<dbReference type="GO" id="GO:0035729">
    <property type="term" value="P:cellular response to hepatocyte growth factor stimulus"/>
    <property type="evidence" value="ECO:0007669"/>
    <property type="project" value="Ensembl"/>
</dbReference>
<dbReference type="GO" id="GO:0097061">
    <property type="term" value="P:dendritic spine organization"/>
    <property type="evidence" value="ECO:0000316"/>
    <property type="project" value="ARUK-UCL"/>
</dbReference>
<dbReference type="GO" id="GO:0007613">
    <property type="term" value="P:memory"/>
    <property type="evidence" value="ECO:0000316"/>
    <property type="project" value="ARUK-UCL"/>
</dbReference>
<dbReference type="GO" id="GO:1901185">
    <property type="term" value="P:negative regulation of ERBB signaling pathway"/>
    <property type="evidence" value="ECO:0000315"/>
    <property type="project" value="UniProtKB"/>
</dbReference>
<dbReference type="GO" id="GO:0010629">
    <property type="term" value="P:negative regulation of gene expression"/>
    <property type="evidence" value="ECO:0007669"/>
    <property type="project" value="Ensembl"/>
</dbReference>
<dbReference type="GO" id="GO:0040015">
    <property type="term" value="P:negative regulation of multicellular organism growth"/>
    <property type="evidence" value="ECO:0000315"/>
    <property type="project" value="MGI"/>
</dbReference>
<dbReference type="GO" id="GO:0043524">
    <property type="term" value="P:negative regulation of neuron apoptotic process"/>
    <property type="evidence" value="ECO:0000266"/>
    <property type="project" value="MGI"/>
</dbReference>
<dbReference type="GO" id="GO:0008284">
    <property type="term" value="P:positive regulation of cell population proliferation"/>
    <property type="evidence" value="ECO:0007669"/>
    <property type="project" value="Ensembl"/>
</dbReference>
<dbReference type="GO" id="GO:2001028">
    <property type="term" value="P:positive regulation of endothelial cell chemotaxis"/>
    <property type="evidence" value="ECO:0007669"/>
    <property type="project" value="Ensembl"/>
</dbReference>
<dbReference type="GO" id="GO:1900273">
    <property type="term" value="P:positive regulation of long-term synaptic potentiation"/>
    <property type="evidence" value="ECO:0000316"/>
    <property type="project" value="ARUK-UCL"/>
</dbReference>
<dbReference type="GO" id="GO:0045931">
    <property type="term" value="P:positive regulation of mitotic cell cycle"/>
    <property type="evidence" value="ECO:0007669"/>
    <property type="project" value="Ensembl"/>
</dbReference>
<dbReference type="GO" id="GO:0090026">
    <property type="term" value="P:positive regulation of monocyte chemotaxis"/>
    <property type="evidence" value="ECO:0007669"/>
    <property type="project" value="Ensembl"/>
</dbReference>
<dbReference type="GO" id="GO:0051604">
    <property type="term" value="P:protein maturation"/>
    <property type="evidence" value="ECO:0000314"/>
    <property type="project" value="UniProt"/>
</dbReference>
<dbReference type="GO" id="GO:0006508">
    <property type="term" value="P:proteolysis"/>
    <property type="evidence" value="ECO:0000314"/>
    <property type="project" value="UniProtKB"/>
</dbReference>
<dbReference type="GO" id="GO:0051603">
    <property type="term" value="P:proteolysis involved in protein catabolic process"/>
    <property type="evidence" value="ECO:0000315"/>
    <property type="project" value="UniProtKB"/>
</dbReference>
<dbReference type="GO" id="GO:0032801">
    <property type="term" value="P:receptor catabolic process"/>
    <property type="evidence" value="ECO:0000315"/>
    <property type="project" value="UniProtKB"/>
</dbReference>
<dbReference type="GO" id="GO:0003014">
    <property type="term" value="P:renal system process"/>
    <property type="evidence" value="ECO:0000315"/>
    <property type="project" value="UniProtKB"/>
</dbReference>
<dbReference type="GO" id="GO:0010447">
    <property type="term" value="P:response to acidic pH"/>
    <property type="evidence" value="ECO:0000315"/>
    <property type="project" value="ARUK-UCL"/>
</dbReference>
<dbReference type="CDD" id="cd21115">
    <property type="entry name" value="legumain_C"/>
    <property type="match status" value="1"/>
</dbReference>
<dbReference type="FunFam" id="3.40.50.1460:FF:000006">
    <property type="entry name" value="Legumain"/>
    <property type="match status" value="1"/>
</dbReference>
<dbReference type="FunFam" id="1.10.132.130:FF:000002">
    <property type="entry name" value="Legumain preproprotein"/>
    <property type="match status" value="1"/>
</dbReference>
<dbReference type="Gene3D" id="1.10.132.130">
    <property type="match status" value="1"/>
</dbReference>
<dbReference type="Gene3D" id="3.40.50.1460">
    <property type="match status" value="1"/>
</dbReference>
<dbReference type="InterPro" id="IPR043577">
    <property type="entry name" value="AE"/>
</dbReference>
<dbReference type="InterPro" id="IPR048501">
    <property type="entry name" value="Legum_prodom"/>
</dbReference>
<dbReference type="InterPro" id="IPR046427">
    <property type="entry name" value="Legumain_prodom_sf"/>
</dbReference>
<dbReference type="InterPro" id="IPR001096">
    <property type="entry name" value="Peptidase_C13"/>
</dbReference>
<dbReference type="PANTHER" id="PTHR12000">
    <property type="entry name" value="HEMOGLOBINASE FAMILY MEMBER"/>
    <property type="match status" value="1"/>
</dbReference>
<dbReference type="PANTHER" id="PTHR12000:SF42">
    <property type="entry name" value="LEGUMAIN"/>
    <property type="match status" value="1"/>
</dbReference>
<dbReference type="Pfam" id="PF20985">
    <property type="entry name" value="Legum_prodom"/>
    <property type="match status" value="1"/>
</dbReference>
<dbReference type="Pfam" id="PF01650">
    <property type="entry name" value="Peptidase_C13"/>
    <property type="match status" value="1"/>
</dbReference>
<dbReference type="PIRSF" id="PIRSF500139">
    <property type="entry name" value="AE"/>
    <property type="match status" value="1"/>
</dbReference>
<dbReference type="PIRSF" id="PIRSF019663">
    <property type="entry name" value="Legumain"/>
    <property type="match status" value="1"/>
</dbReference>
<dbReference type="PRINTS" id="PR00776">
    <property type="entry name" value="HEMOGLOBNASE"/>
</dbReference>
<name>LGMN_MOUSE</name>
<keyword id="KW-0002">3D-structure</keyword>
<keyword id="KW-1015">Disulfide bond</keyword>
<keyword id="KW-0325">Glycoprotein</keyword>
<keyword id="KW-0378">Hydrolase</keyword>
<keyword id="KW-0458">Lysosome</keyword>
<keyword id="KW-0645">Protease</keyword>
<keyword id="KW-1185">Reference proteome</keyword>
<keyword id="KW-0732">Signal</keyword>
<keyword id="KW-0788">Thiol protease</keyword>
<keyword id="KW-0865">Zymogen</keyword>
<protein>
    <recommendedName>
        <fullName evidence="9">Legumain</fullName>
        <ecNumber evidence="5 7 8">3.4.22.34</ecNumber>
    </recommendedName>
    <alternativeName>
        <fullName>Protease, cysteine 1</fullName>
    </alternativeName>
</protein>
<comment type="function">
    <text evidence="1 3 4 5 6 7 8">Has a strict specificity for hydrolysis of asparaginyl bonds (PubMed:24407422, PubMed:9742219, PubMed:9891971). Can also cleave aspartyl bonds slowly, especially under acidic conditions (PubMed:24407422, PubMed:9742219, PubMed:9891971). Involved in the processing of proteins for MHC class II antigen presentation in the lysosomal/endosomal system (By similarity). Also involved in MHC class I antigen presentation in cross-presenting dendritic cells by mediating cleavage and maturation of Perforin-2 (MPEG1), thereby promoting antigen translocation in the cytosol (PubMed:37347855). Required for normal lysosomal protein degradation in renal proximal tubules (PubMed:17350006, PubMed:21292981). Required for normal degradation of internalized EGFR (PubMed:21292981). Plays a role in the regulation of cell proliferation via its role in EGFR degradation (PubMed:21292981).</text>
</comment>
<comment type="catalytic activity">
    <reaction evidence="5 7 8">
        <text>Hydrolysis of proteins and small molecule substrates at -Asn-|-Xaa- bonds.</text>
        <dbReference type="EC" id="3.4.22.34"/>
    </reaction>
</comment>
<comment type="activity regulation">
    <text evidence="5">Inhibited by cystatin-C.</text>
</comment>
<comment type="biophysicochemical properties">
    <phDependence>
        <text evidence="7">Optimum pH is 6.</text>
    </phDependence>
</comment>
<comment type="subunit">
    <text evidence="1 5">Homodimer before autocatalytic removal of the propeptide (PubMed:24407422). Monomer after autocatalytic processing (PubMed:24407422). May interact with integrins (By similarity).</text>
</comment>
<comment type="subcellular location">
    <subcellularLocation>
        <location evidence="4 7">Lysosome</location>
    </subcellularLocation>
</comment>
<comment type="tissue specificity">
    <text evidence="4 7">Detected in kidney proximal tubules (at protein level). Ubiquitous. Particularly abundant in kidney and placenta.</text>
</comment>
<comment type="domain">
    <text evidence="1">In the zymogen form, the uncleaved propeptide blocks access to the active site.</text>
</comment>
<comment type="PTM">
    <text evidence="11">Glycosylated.</text>
</comment>
<comment type="PTM">
    <text evidence="1">Activated by autocatalytic processing at pH 4.</text>
</comment>
<comment type="disruption phenotype">
    <text evidence="3 4">Young mice initially display no obvious phenotype, but fail to gain weight normally. Mutant mice display pale kidneys with abnormal proliferation of proximal tubule cells, proximal tubule hyperplasia and develop kidney interstitium fibrosis. After 6 months, mutant mice display a decreased glomerular filtration rate, increased plasma creatinine levels and proteinuria. Glomerular lysosomes do not show a generalized defect in protein catabolism. Instead they show defects in the degradation of a set of target proteins, including EGFR.</text>
</comment>
<comment type="similarity">
    <text evidence="10">Belongs to the peptidase C13 family.</text>
</comment>
<feature type="signal peptide" evidence="1">
    <location>
        <begin position="1"/>
        <end position="17"/>
    </location>
</feature>
<feature type="chain" id="PRO_0000026504" description="Legumain">
    <location>
        <begin position="18"/>
        <end position="325"/>
    </location>
</feature>
<feature type="propeptide" id="PRO_0000026505">
    <location>
        <begin position="326"/>
        <end position="435"/>
    </location>
</feature>
<feature type="active site" evidence="8">
    <location>
        <position position="150"/>
    </location>
</feature>
<feature type="active site" description="Nucleophile" evidence="8">
    <location>
        <position position="191"/>
    </location>
</feature>
<feature type="site" description="Cleavage; by autolysis">
    <location>
        <begin position="325"/>
        <end position="326"/>
    </location>
</feature>
<feature type="glycosylation site" description="N-linked (GlcNAc...) asparagine" evidence="2">
    <location>
        <position position="93"/>
    </location>
</feature>
<feature type="glycosylation site" description="N-linked (GlcNAc...) asparagine" evidence="2">
    <location>
        <position position="169"/>
    </location>
</feature>
<feature type="glycosylation site" description="N-linked (GlcNAc...) asparagine" evidence="2">
    <location>
        <position position="265"/>
    </location>
</feature>
<feature type="glycosylation site" description="N-linked (GlcNAc...) asparagine" evidence="2">
    <location>
        <position position="274"/>
    </location>
</feature>
<feature type="disulfide bond" evidence="5">
    <location>
        <begin position="380"/>
        <end position="414"/>
    </location>
</feature>
<feature type="disulfide bond" evidence="5">
    <location>
        <begin position="392"/>
        <end position="431"/>
    </location>
</feature>
<feature type="mutagenesis site" description="Nearly abolishes enzyme activity." evidence="5">
    <original>N</original>
    <variation>A</variation>
    <location>
        <position position="44"/>
    </location>
</feature>
<feature type="mutagenesis site" description="Nearly abolishes enzyme activity." evidence="5">
    <original>R</original>
    <variation>A</variation>
    <location>
        <position position="46"/>
    </location>
</feature>
<feature type="mutagenesis site" description="54% Loss of activity." evidence="8">
    <original>H</original>
    <variation>A</variation>
    <location>
        <position position="47"/>
    </location>
</feature>
<feature type="mutagenesis site" description="No loss of activity." evidence="8">
    <original>C</original>
    <variation>S</variation>
    <location>
        <position position="52"/>
    </location>
</feature>
<feature type="mutagenesis site" description="Complete loss of activity. Abolishes autocatalytic processing." evidence="5 8">
    <original>H</original>
    <variation>A</variation>
    <location>
        <position position="150"/>
    </location>
</feature>
<feature type="mutagenesis site" description="Abolishes enzyme activity." evidence="5">
    <original>E</original>
    <variation>A</variation>
    <location>
        <position position="189"/>
    </location>
</feature>
<feature type="mutagenesis site" description="Abolishes enzyme activity." evidence="5 8">
    <original>C</original>
    <variation>A</variation>
    <variation>S</variation>
    <location>
        <position position="191"/>
    </location>
</feature>
<feature type="mutagenesis site" description="Abolishes enzyme activity. Abolishes autocatalytic processing." evidence="5">
    <original>D</original>
    <variation>A</variation>
    <location>
        <position position="233"/>
    </location>
</feature>
<feature type="mutagenesis site" description="Nearly abolishes enzyme activity." evidence="5">
    <original>D</original>
    <variation>A</variation>
    <location>
        <position position="311"/>
    </location>
</feature>
<feature type="strand" evidence="14">
    <location>
        <begin position="31"/>
        <end position="37"/>
    </location>
</feature>
<feature type="helix" evidence="14">
    <location>
        <begin position="42"/>
        <end position="44"/>
    </location>
</feature>
<feature type="helix" evidence="14">
    <location>
        <begin position="45"/>
        <end position="60"/>
    </location>
</feature>
<feature type="helix" evidence="14">
    <location>
        <begin position="65"/>
        <end position="67"/>
    </location>
</feature>
<feature type="strand" evidence="14">
    <location>
        <begin position="68"/>
        <end position="71"/>
    </location>
</feature>
<feature type="strand" evidence="12">
    <location>
        <begin position="76"/>
        <end position="79"/>
    </location>
</feature>
<feature type="strand" evidence="13">
    <location>
        <begin position="89"/>
        <end position="91"/>
    </location>
</feature>
<feature type="helix" evidence="14">
    <location>
        <begin position="107"/>
        <end position="109"/>
    </location>
</feature>
<feature type="helix" evidence="14">
    <location>
        <begin position="112"/>
        <end position="120"/>
    </location>
</feature>
<feature type="helix" evidence="14">
    <location>
        <begin position="124"/>
        <end position="126"/>
    </location>
</feature>
<feature type="strand" evidence="14">
    <location>
        <begin position="142"/>
        <end position="149"/>
    </location>
</feature>
<feature type="strand" evidence="14">
    <location>
        <begin position="155"/>
        <end position="157"/>
    </location>
</feature>
<feature type="strand" evidence="14">
    <location>
        <begin position="159"/>
        <end position="164"/>
    </location>
</feature>
<feature type="helix" evidence="14">
    <location>
        <begin position="165"/>
        <end position="177"/>
    </location>
</feature>
<feature type="strand" evidence="14">
    <location>
        <begin position="182"/>
        <end position="190"/>
    </location>
</feature>
<feature type="helix" evidence="14">
    <location>
        <begin position="193"/>
        <end position="196"/>
    </location>
</feature>
<feature type="turn" evidence="14">
    <location>
        <begin position="197"/>
        <end position="199"/>
    </location>
</feature>
<feature type="strand" evidence="14">
    <location>
        <begin position="202"/>
        <end position="212"/>
    </location>
</feature>
<feature type="strand" evidence="14">
    <location>
        <begin position="219"/>
        <end position="224"/>
    </location>
</feature>
<feature type="turn" evidence="14">
    <location>
        <begin position="225"/>
        <end position="228"/>
    </location>
</feature>
<feature type="strand" evidence="14">
    <location>
        <begin position="229"/>
        <end position="233"/>
    </location>
</feature>
<feature type="helix" evidence="14">
    <location>
        <begin position="234"/>
        <end position="245"/>
    </location>
</feature>
<feature type="turn" evidence="14">
    <location>
        <begin position="248"/>
        <end position="250"/>
    </location>
</feature>
<feature type="helix" evidence="14">
    <location>
        <begin position="253"/>
        <end position="263"/>
    </location>
</feature>
<feature type="strand" evidence="14">
    <location>
        <begin position="270"/>
        <end position="273"/>
    </location>
</feature>
<feature type="helix" evidence="14">
    <location>
        <begin position="275"/>
        <end position="279"/>
    </location>
</feature>
<feature type="helix" evidence="14">
    <location>
        <begin position="283"/>
        <end position="286"/>
    </location>
</feature>
<feature type="helix" evidence="14">
    <location>
        <begin position="309"/>
        <end position="311"/>
    </location>
</feature>
<feature type="helix" evidence="14">
    <location>
        <begin position="312"/>
        <end position="323"/>
    </location>
</feature>
<feature type="helix" evidence="14">
    <location>
        <begin position="327"/>
        <end position="359"/>
    </location>
</feature>
<feature type="helix" evidence="14">
    <location>
        <begin position="363"/>
        <end position="370"/>
    </location>
</feature>
<feature type="helix" evidence="14">
    <location>
        <begin position="378"/>
        <end position="391"/>
    </location>
</feature>
<feature type="helix" evidence="14">
    <location>
        <begin position="401"/>
        <end position="406"/>
    </location>
</feature>
<feature type="helix" evidence="14">
    <location>
        <begin position="407"/>
        <end position="415"/>
    </location>
</feature>
<feature type="helix" evidence="14">
    <location>
        <begin position="420"/>
        <end position="431"/>
    </location>
</feature>
<proteinExistence type="evidence at protein level"/>